<organism>
    <name type="scientific">Alcanivorax borkumensis (strain ATCC 700651 / DSM 11573 / NCIMB 13689 / SK2)</name>
    <dbReference type="NCBI Taxonomy" id="393595"/>
    <lineage>
        <taxon>Bacteria</taxon>
        <taxon>Pseudomonadati</taxon>
        <taxon>Pseudomonadota</taxon>
        <taxon>Gammaproteobacteria</taxon>
        <taxon>Oceanospirillales</taxon>
        <taxon>Alcanivoracaceae</taxon>
        <taxon>Alcanivorax</taxon>
    </lineage>
</organism>
<proteinExistence type="inferred from homology"/>
<reference key="1">
    <citation type="journal article" date="2006" name="Nat. Biotechnol.">
        <title>Genome sequence of the ubiquitous hydrocarbon-degrading marine bacterium Alcanivorax borkumensis.</title>
        <authorList>
            <person name="Schneiker S."/>
            <person name="Martins dos Santos V.A.P."/>
            <person name="Bartels D."/>
            <person name="Bekel T."/>
            <person name="Brecht M."/>
            <person name="Buhrmester J."/>
            <person name="Chernikova T.N."/>
            <person name="Denaro R."/>
            <person name="Ferrer M."/>
            <person name="Gertler C."/>
            <person name="Goesmann A."/>
            <person name="Golyshina O.V."/>
            <person name="Kaminski F."/>
            <person name="Khachane A.N."/>
            <person name="Lang S."/>
            <person name="Linke B."/>
            <person name="McHardy A.C."/>
            <person name="Meyer F."/>
            <person name="Nechitaylo T."/>
            <person name="Puehler A."/>
            <person name="Regenhardt D."/>
            <person name="Rupp O."/>
            <person name="Sabirova J.S."/>
            <person name="Selbitschka W."/>
            <person name="Yakimov M.M."/>
            <person name="Timmis K.N."/>
            <person name="Vorhoelter F.-J."/>
            <person name="Weidner S."/>
            <person name="Kaiser O."/>
            <person name="Golyshin P.N."/>
        </authorList>
    </citation>
    <scope>NUCLEOTIDE SEQUENCE [LARGE SCALE GENOMIC DNA]</scope>
    <source>
        <strain>ATCC 700651 / DSM 11573 / NCIMB 13689 / SK2</strain>
    </source>
</reference>
<dbReference type="EMBL" id="AM286690">
    <property type="protein sequence ID" value="CAL15850.1"/>
    <property type="molecule type" value="Genomic_DNA"/>
</dbReference>
<dbReference type="RefSeq" id="WP_007149326.1">
    <property type="nucleotide sequence ID" value="NC_008260.1"/>
</dbReference>
<dbReference type="SMR" id="Q0VSJ8"/>
<dbReference type="STRING" id="393595.ABO_0402"/>
<dbReference type="KEGG" id="abo:ABO_0402"/>
<dbReference type="eggNOG" id="COG0091">
    <property type="taxonomic scope" value="Bacteria"/>
</dbReference>
<dbReference type="HOGENOM" id="CLU_083987_3_3_6"/>
<dbReference type="OrthoDB" id="9805969at2"/>
<dbReference type="Proteomes" id="UP000008871">
    <property type="component" value="Chromosome"/>
</dbReference>
<dbReference type="GO" id="GO:0022625">
    <property type="term" value="C:cytosolic large ribosomal subunit"/>
    <property type="evidence" value="ECO:0007669"/>
    <property type="project" value="TreeGrafter"/>
</dbReference>
<dbReference type="GO" id="GO:0019843">
    <property type="term" value="F:rRNA binding"/>
    <property type="evidence" value="ECO:0007669"/>
    <property type="project" value="UniProtKB-UniRule"/>
</dbReference>
<dbReference type="GO" id="GO:0003735">
    <property type="term" value="F:structural constituent of ribosome"/>
    <property type="evidence" value="ECO:0007669"/>
    <property type="project" value="InterPro"/>
</dbReference>
<dbReference type="GO" id="GO:0006412">
    <property type="term" value="P:translation"/>
    <property type="evidence" value="ECO:0007669"/>
    <property type="project" value="UniProtKB-UniRule"/>
</dbReference>
<dbReference type="CDD" id="cd00336">
    <property type="entry name" value="Ribosomal_L22"/>
    <property type="match status" value="1"/>
</dbReference>
<dbReference type="FunFam" id="3.90.470.10:FF:000001">
    <property type="entry name" value="50S ribosomal protein L22"/>
    <property type="match status" value="1"/>
</dbReference>
<dbReference type="Gene3D" id="3.90.470.10">
    <property type="entry name" value="Ribosomal protein L22/L17"/>
    <property type="match status" value="1"/>
</dbReference>
<dbReference type="HAMAP" id="MF_01331_B">
    <property type="entry name" value="Ribosomal_uL22_B"/>
    <property type="match status" value="1"/>
</dbReference>
<dbReference type="InterPro" id="IPR001063">
    <property type="entry name" value="Ribosomal_uL22"/>
</dbReference>
<dbReference type="InterPro" id="IPR005727">
    <property type="entry name" value="Ribosomal_uL22_bac/chlpt-type"/>
</dbReference>
<dbReference type="InterPro" id="IPR047867">
    <property type="entry name" value="Ribosomal_uL22_bac/org-type"/>
</dbReference>
<dbReference type="InterPro" id="IPR018260">
    <property type="entry name" value="Ribosomal_uL22_CS"/>
</dbReference>
<dbReference type="InterPro" id="IPR036394">
    <property type="entry name" value="Ribosomal_uL22_sf"/>
</dbReference>
<dbReference type="NCBIfam" id="TIGR01044">
    <property type="entry name" value="rplV_bact"/>
    <property type="match status" value="1"/>
</dbReference>
<dbReference type="PANTHER" id="PTHR13501">
    <property type="entry name" value="CHLOROPLAST 50S RIBOSOMAL PROTEIN L22-RELATED"/>
    <property type="match status" value="1"/>
</dbReference>
<dbReference type="PANTHER" id="PTHR13501:SF8">
    <property type="entry name" value="LARGE RIBOSOMAL SUBUNIT PROTEIN UL22M"/>
    <property type="match status" value="1"/>
</dbReference>
<dbReference type="Pfam" id="PF00237">
    <property type="entry name" value="Ribosomal_L22"/>
    <property type="match status" value="1"/>
</dbReference>
<dbReference type="SUPFAM" id="SSF54843">
    <property type="entry name" value="Ribosomal protein L22"/>
    <property type="match status" value="1"/>
</dbReference>
<dbReference type="PROSITE" id="PS00464">
    <property type="entry name" value="RIBOSOMAL_L22"/>
    <property type="match status" value="1"/>
</dbReference>
<gene>
    <name evidence="1" type="primary">rplV</name>
    <name type="ordered locus">ABO_0402</name>
</gene>
<comment type="function">
    <text evidence="1">This protein binds specifically to 23S rRNA; its binding is stimulated by other ribosomal proteins, e.g. L4, L17, and L20. It is important during the early stages of 50S assembly. It makes multiple contacts with different domains of the 23S rRNA in the assembled 50S subunit and ribosome (By similarity).</text>
</comment>
<comment type="function">
    <text evidence="1">The globular domain of the protein is located near the polypeptide exit tunnel on the outside of the subunit, while an extended beta-hairpin is found that lines the wall of the exit tunnel in the center of the 70S ribosome.</text>
</comment>
<comment type="subunit">
    <text evidence="1">Part of the 50S ribosomal subunit.</text>
</comment>
<comment type="similarity">
    <text evidence="1">Belongs to the universal ribosomal protein uL22 family.</text>
</comment>
<feature type="chain" id="PRO_0000354444" description="Large ribosomal subunit protein uL22">
    <location>
        <begin position="1"/>
        <end position="114"/>
    </location>
</feature>
<name>RL22_ALCBS</name>
<evidence type="ECO:0000255" key="1">
    <source>
        <dbReference type="HAMAP-Rule" id="MF_01331"/>
    </source>
</evidence>
<evidence type="ECO:0000305" key="2"/>
<protein>
    <recommendedName>
        <fullName evidence="1">Large ribosomal subunit protein uL22</fullName>
    </recommendedName>
    <alternativeName>
        <fullName evidence="2">50S ribosomal protein L22</fullName>
    </alternativeName>
</protein>
<keyword id="KW-1185">Reference proteome</keyword>
<keyword id="KW-0687">Ribonucleoprotein</keyword>
<keyword id="KW-0689">Ribosomal protein</keyword>
<keyword id="KW-0694">RNA-binding</keyword>
<keyword id="KW-0699">rRNA-binding</keyword>
<accession>Q0VSJ8</accession>
<sequence>MATEVAARLRGARISAQKARLVADQVRGLEVEKALNLLEFSPKKAAKIVKKVLESAIANAENNDGADVDELKVSTVFVDEGMTMKRIRPRAKGRADRILKRTCHITVKVSEGQE</sequence>